<dbReference type="EC" id="4.3.3.7" evidence="1"/>
<dbReference type="EMBL" id="BA000028">
    <property type="protein sequence ID" value="BAC13664.1"/>
    <property type="molecule type" value="Genomic_DNA"/>
</dbReference>
<dbReference type="RefSeq" id="WP_011066109.1">
    <property type="nucleotide sequence ID" value="NC_004193.1"/>
</dbReference>
<dbReference type="SMR" id="Q8EQJ1"/>
<dbReference type="STRING" id="221109.gene:10733948"/>
<dbReference type="KEGG" id="oih:OB1708"/>
<dbReference type="eggNOG" id="COG0329">
    <property type="taxonomic scope" value="Bacteria"/>
</dbReference>
<dbReference type="HOGENOM" id="CLU_049343_7_1_9"/>
<dbReference type="OrthoDB" id="9782828at2"/>
<dbReference type="PhylomeDB" id="Q8EQJ1"/>
<dbReference type="UniPathway" id="UPA00034">
    <property type="reaction ID" value="UER00017"/>
</dbReference>
<dbReference type="Proteomes" id="UP000000822">
    <property type="component" value="Chromosome"/>
</dbReference>
<dbReference type="GO" id="GO:0005829">
    <property type="term" value="C:cytosol"/>
    <property type="evidence" value="ECO:0007669"/>
    <property type="project" value="TreeGrafter"/>
</dbReference>
<dbReference type="GO" id="GO:0008840">
    <property type="term" value="F:4-hydroxy-tetrahydrodipicolinate synthase activity"/>
    <property type="evidence" value="ECO:0007669"/>
    <property type="project" value="UniProtKB-UniRule"/>
</dbReference>
<dbReference type="GO" id="GO:0019877">
    <property type="term" value="P:diaminopimelate biosynthetic process"/>
    <property type="evidence" value="ECO:0007669"/>
    <property type="project" value="UniProtKB-UniRule"/>
</dbReference>
<dbReference type="GO" id="GO:0009089">
    <property type="term" value="P:lysine biosynthetic process via diaminopimelate"/>
    <property type="evidence" value="ECO:0007669"/>
    <property type="project" value="UniProtKB-UniRule"/>
</dbReference>
<dbReference type="CDD" id="cd00950">
    <property type="entry name" value="DHDPS"/>
    <property type="match status" value="1"/>
</dbReference>
<dbReference type="Gene3D" id="3.20.20.70">
    <property type="entry name" value="Aldolase class I"/>
    <property type="match status" value="1"/>
</dbReference>
<dbReference type="HAMAP" id="MF_00418">
    <property type="entry name" value="DapA"/>
    <property type="match status" value="1"/>
</dbReference>
<dbReference type="InterPro" id="IPR013785">
    <property type="entry name" value="Aldolase_TIM"/>
</dbReference>
<dbReference type="InterPro" id="IPR005263">
    <property type="entry name" value="DapA"/>
</dbReference>
<dbReference type="InterPro" id="IPR002220">
    <property type="entry name" value="DapA-like"/>
</dbReference>
<dbReference type="InterPro" id="IPR020625">
    <property type="entry name" value="Schiff_base-form_aldolases_AS"/>
</dbReference>
<dbReference type="InterPro" id="IPR020624">
    <property type="entry name" value="Schiff_base-form_aldolases_CS"/>
</dbReference>
<dbReference type="NCBIfam" id="TIGR00674">
    <property type="entry name" value="dapA"/>
    <property type="match status" value="1"/>
</dbReference>
<dbReference type="PANTHER" id="PTHR12128:SF66">
    <property type="entry name" value="4-HYDROXY-2-OXOGLUTARATE ALDOLASE, MITOCHONDRIAL"/>
    <property type="match status" value="1"/>
</dbReference>
<dbReference type="PANTHER" id="PTHR12128">
    <property type="entry name" value="DIHYDRODIPICOLINATE SYNTHASE"/>
    <property type="match status" value="1"/>
</dbReference>
<dbReference type="Pfam" id="PF00701">
    <property type="entry name" value="DHDPS"/>
    <property type="match status" value="1"/>
</dbReference>
<dbReference type="PIRSF" id="PIRSF001365">
    <property type="entry name" value="DHDPS"/>
    <property type="match status" value="1"/>
</dbReference>
<dbReference type="PRINTS" id="PR00146">
    <property type="entry name" value="DHPICSNTHASE"/>
</dbReference>
<dbReference type="SMART" id="SM01130">
    <property type="entry name" value="DHDPS"/>
    <property type="match status" value="1"/>
</dbReference>
<dbReference type="SUPFAM" id="SSF51569">
    <property type="entry name" value="Aldolase"/>
    <property type="match status" value="1"/>
</dbReference>
<dbReference type="PROSITE" id="PS00665">
    <property type="entry name" value="DHDPS_1"/>
    <property type="match status" value="1"/>
</dbReference>
<dbReference type="PROSITE" id="PS00666">
    <property type="entry name" value="DHDPS_2"/>
    <property type="match status" value="1"/>
</dbReference>
<proteinExistence type="inferred from homology"/>
<sequence length="295" mass="32253">MNFGKVLTAMVTPFDKHEEIDFQALDHLIDHLINNGSDGLVVAGTTGESPTLTHEERIKLFEYVVKKVNGAVPVIAGTGSNYTKASIELTKEVAKTGVDGVMLVAPYYNKPSQDSMYEHFKVIAESTELPVMLYNVPGRTGVDMDVSTVVRLSQIDNIVSIKDASGNLEKMTNIIRLTDDNFSVYSGEDSLTLPALAIGADGIVSVSSHIIGNDMQEMIQRFEQGQVAEAANIHQRVLPVMQEMFANPSPVPVKTALNLQSVPVGKVRLPLIELTDEQLQNLQSVLSDFEHSKMI</sequence>
<protein>
    <recommendedName>
        <fullName evidence="1">4-hydroxy-tetrahydrodipicolinate synthase</fullName>
        <shortName evidence="1">HTPA synthase</shortName>
        <ecNumber evidence="1">4.3.3.7</ecNumber>
    </recommendedName>
</protein>
<accession>Q8EQJ1</accession>
<keyword id="KW-0028">Amino-acid biosynthesis</keyword>
<keyword id="KW-0963">Cytoplasm</keyword>
<keyword id="KW-0220">Diaminopimelate biosynthesis</keyword>
<keyword id="KW-0456">Lyase</keyword>
<keyword id="KW-0457">Lysine biosynthesis</keyword>
<keyword id="KW-1185">Reference proteome</keyword>
<keyword id="KW-0704">Schiff base</keyword>
<comment type="function">
    <text evidence="1">Catalyzes the condensation of (S)-aspartate-beta-semialdehyde [(S)-ASA] and pyruvate to 4-hydroxy-tetrahydrodipicolinate (HTPA).</text>
</comment>
<comment type="catalytic activity">
    <reaction evidence="1">
        <text>L-aspartate 4-semialdehyde + pyruvate = (2S,4S)-4-hydroxy-2,3,4,5-tetrahydrodipicolinate + H2O + H(+)</text>
        <dbReference type="Rhea" id="RHEA:34171"/>
        <dbReference type="ChEBI" id="CHEBI:15361"/>
        <dbReference type="ChEBI" id="CHEBI:15377"/>
        <dbReference type="ChEBI" id="CHEBI:15378"/>
        <dbReference type="ChEBI" id="CHEBI:67139"/>
        <dbReference type="ChEBI" id="CHEBI:537519"/>
        <dbReference type="EC" id="4.3.3.7"/>
    </reaction>
</comment>
<comment type="pathway">
    <text evidence="1">Amino-acid biosynthesis; L-lysine biosynthesis via DAP pathway; (S)-tetrahydrodipicolinate from L-aspartate: step 3/4.</text>
</comment>
<comment type="subunit">
    <text evidence="1">Homotetramer; dimer of dimers.</text>
</comment>
<comment type="subcellular location">
    <subcellularLocation>
        <location evidence="1">Cytoplasm</location>
    </subcellularLocation>
</comment>
<comment type="similarity">
    <text evidence="1">Belongs to the DapA family.</text>
</comment>
<comment type="caution">
    <text evidence="2">Was originally thought to be a dihydrodipicolinate synthase (DHDPS), catalyzing the condensation of (S)-aspartate-beta-semialdehyde [(S)-ASA] and pyruvate to dihydrodipicolinate (DHDP). However, it was shown in E.coli that the product of the enzymatic reaction is not dihydrodipicolinate but in fact (4S)-4-hydroxy-2,3,4,5-tetrahydro-(2S)-dipicolinic acid (HTPA), and that the consecutive dehydration reaction leading to DHDP is not spontaneous but catalyzed by DapB.</text>
</comment>
<gene>
    <name evidence="1" type="primary">dapA</name>
    <name type="ordered locus">OB1708</name>
</gene>
<feature type="chain" id="PRO_0000103132" description="4-hydroxy-tetrahydrodipicolinate synthase">
    <location>
        <begin position="1"/>
        <end position="295"/>
    </location>
</feature>
<feature type="active site" description="Proton donor/acceptor" evidence="1">
    <location>
        <position position="134"/>
    </location>
</feature>
<feature type="active site" description="Schiff-base intermediate with substrate" evidence="1">
    <location>
        <position position="162"/>
    </location>
</feature>
<feature type="binding site" evidence="1">
    <location>
        <position position="46"/>
    </location>
    <ligand>
        <name>pyruvate</name>
        <dbReference type="ChEBI" id="CHEBI:15361"/>
    </ligand>
</feature>
<feature type="binding site" evidence="1">
    <location>
        <position position="204"/>
    </location>
    <ligand>
        <name>pyruvate</name>
        <dbReference type="ChEBI" id="CHEBI:15361"/>
    </ligand>
</feature>
<feature type="site" description="Part of a proton relay during catalysis" evidence="1">
    <location>
        <position position="45"/>
    </location>
</feature>
<feature type="site" description="Part of a proton relay during catalysis" evidence="1">
    <location>
        <position position="108"/>
    </location>
</feature>
<evidence type="ECO:0000255" key="1">
    <source>
        <dbReference type="HAMAP-Rule" id="MF_00418"/>
    </source>
</evidence>
<evidence type="ECO:0000305" key="2"/>
<organism>
    <name type="scientific">Oceanobacillus iheyensis (strain DSM 14371 / CIP 107618 / JCM 11309 / KCTC 3954 / HTE831)</name>
    <dbReference type="NCBI Taxonomy" id="221109"/>
    <lineage>
        <taxon>Bacteria</taxon>
        <taxon>Bacillati</taxon>
        <taxon>Bacillota</taxon>
        <taxon>Bacilli</taxon>
        <taxon>Bacillales</taxon>
        <taxon>Bacillaceae</taxon>
        <taxon>Oceanobacillus</taxon>
    </lineage>
</organism>
<name>DAPA_OCEIH</name>
<reference key="1">
    <citation type="journal article" date="2002" name="Nucleic Acids Res.">
        <title>Genome sequence of Oceanobacillus iheyensis isolated from the Iheya Ridge and its unexpected adaptive capabilities to extreme environments.</title>
        <authorList>
            <person name="Takami H."/>
            <person name="Takaki Y."/>
            <person name="Uchiyama I."/>
        </authorList>
    </citation>
    <scope>NUCLEOTIDE SEQUENCE [LARGE SCALE GENOMIC DNA]</scope>
    <source>
        <strain>DSM 14371 / CIP 107618 / JCM 11309 / KCTC 3954 / HTE831</strain>
    </source>
</reference>